<dbReference type="EC" id="7.1.1.8"/>
<dbReference type="EMBL" id="AK003966">
    <property type="protein sequence ID" value="BAB23097.1"/>
    <property type="molecule type" value="mRNA"/>
</dbReference>
<dbReference type="EMBL" id="AK012180">
    <property type="protein sequence ID" value="BAB28081.1"/>
    <property type="molecule type" value="mRNA"/>
</dbReference>
<dbReference type="EMBL" id="AK014470">
    <property type="protein sequence ID" value="BAB29374.1"/>
    <property type="molecule type" value="mRNA"/>
</dbReference>
<dbReference type="EMBL" id="AK153139">
    <property type="protein sequence ID" value="BAE31751.1"/>
    <property type="molecule type" value="mRNA"/>
</dbReference>
<dbReference type="EMBL" id="AK152391">
    <property type="protein sequence ID" value="BAE31179.1"/>
    <property type="molecule type" value="mRNA"/>
</dbReference>
<dbReference type="EMBL" id="AL611944">
    <property type="protein sequence ID" value="CAI24872.1"/>
    <property type="molecule type" value="Genomic_DNA"/>
</dbReference>
<dbReference type="EMBL" id="BC019934">
    <property type="protein sequence ID" value="AAH19934.1"/>
    <property type="molecule type" value="mRNA"/>
</dbReference>
<dbReference type="CCDS" id="CCDS26416.1"/>
<dbReference type="RefSeq" id="NP_079986.1">
    <property type="nucleotide sequence ID" value="NM_025710.2"/>
</dbReference>
<dbReference type="PDB" id="7O37">
    <property type="method" value="EM"/>
    <property type="resolution" value="3.20 A"/>
    <property type="chains" value="E/P=79-274"/>
</dbReference>
<dbReference type="PDB" id="8IAO">
    <property type="method" value="EM"/>
    <property type="resolution" value="4.20 A"/>
    <property type="chains" value="AE/AI/Ae/Ai=1-274"/>
</dbReference>
<dbReference type="PDB" id="8IAR">
    <property type="method" value="EM"/>
    <property type="resolution" value="3.40 A"/>
    <property type="chains" value="AE/AI/Ae/Ai=1-274"/>
</dbReference>
<dbReference type="PDB" id="8IB4">
    <property type="method" value="EM"/>
    <property type="resolution" value="4.30 A"/>
    <property type="chains" value="AE/AI/Ae=1-274"/>
</dbReference>
<dbReference type="PDB" id="8IB7">
    <property type="method" value="EM"/>
    <property type="resolution" value="3.40 A"/>
    <property type="chains" value="AE/AI/Ae=1-274"/>
</dbReference>
<dbReference type="PDB" id="8IB9">
    <property type="method" value="EM"/>
    <property type="resolution" value="4.30 A"/>
    <property type="chains" value="AE/AI/Ae=1-274"/>
</dbReference>
<dbReference type="PDB" id="8IBC">
    <property type="method" value="EM"/>
    <property type="resolution" value="3.60 A"/>
    <property type="chains" value="AE/AI/Ae=1-274"/>
</dbReference>
<dbReference type="PDB" id="8IBD">
    <property type="method" value="EM"/>
    <property type="resolution" value="4.20 A"/>
    <property type="chains" value="AE/AI/Ae/Ai=1-274"/>
</dbReference>
<dbReference type="PDB" id="8IBG">
    <property type="method" value="EM"/>
    <property type="resolution" value="3.80 A"/>
    <property type="chains" value="AE/AI/Ae/Ai=1-274"/>
</dbReference>
<dbReference type="PDB" id="8IC2">
    <property type="method" value="EM"/>
    <property type="resolution" value="6.30 A"/>
    <property type="chains" value="AE/AI/Ae=1-274"/>
</dbReference>
<dbReference type="PDB" id="8IC5">
    <property type="method" value="EM"/>
    <property type="resolution" value="4.10 A"/>
    <property type="chains" value="AE/AI/Ae=1-274"/>
</dbReference>
<dbReference type="PDB" id="8PW5">
    <property type="method" value="EM"/>
    <property type="resolution" value="3.60 A"/>
    <property type="chains" value="E/P/T=1-274"/>
</dbReference>
<dbReference type="PDB" id="8PW6">
    <property type="method" value="EM"/>
    <property type="resolution" value="3.30 A"/>
    <property type="chains" value="E/P/T=1-274"/>
</dbReference>
<dbReference type="PDB" id="8PW7">
    <property type="method" value="EM"/>
    <property type="resolution" value="3.50 A"/>
    <property type="chains" value="E/P/T=1-274"/>
</dbReference>
<dbReference type="PDBsum" id="7O37"/>
<dbReference type="PDBsum" id="8IAO"/>
<dbReference type="PDBsum" id="8IAR"/>
<dbReference type="PDBsum" id="8IB4"/>
<dbReference type="PDBsum" id="8IB7"/>
<dbReference type="PDBsum" id="8IB9"/>
<dbReference type="PDBsum" id="8IBC"/>
<dbReference type="PDBsum" id="8IBD"/>
<dbReference type="PDBsum" id="8IBG"/>
<dbReference type="PDBsum" id="8IC2"/>
<dbReference type="PDBsum" id="8IC5"/>
<dbReference type="PDBsum" id="8PW5"/>
<dbReference type="PDBsum" id="8PW6"/>
<dbReference type="PDBsum" id="8PW7"/>
<dbReference type="EMDB" id="EMD-12702"/>
<dbReference type="EMDB" id="EMD-12703"/>
<dbReference type="EMDB" id="EMD-12705"/>
<dbReference type="EMDB" id="EMD-12706"/>
<dbReference type="EMDB" id="EMD-17989"/>
<dbReference type="EMDB" id="EMD-17990"/>
<dbReference type="EMDB" id="EMD-17991"/>
<dbReference type="EMDB" id="EMD-35313"/>
<dbReference type="EMDB" id="EMD-35316"/>
<dbReference type="EMDB" id="EMD-35331"/>
<dbReference type="EMDB" id="EMD-35334"/>
<dbReference type="EMDB" id="EMD-35336"/>
<dbReference type="EMDB" id="EMD-35339"/>
<dbReference type="EMDB" id="EMD-35340"/>
<dbReference type="EMDB" id="EMD-35343"/>
<dbReference type="EMDB" id="EMD-35352"/>
<dbReference type="EMDB" id="EMD-35355"/>
<dbReference type="EMDB" id="EMD-42122"/>
<dbReference type="SMR" id="Q9CR68"/>
<dbReference type="BioGRID" id="211651">
    <property type="interactions" value="80"/>
</dbReference>
<dbReference type="ComplexPortal" id="CPX-563">
    <property type="entry name" value="Mitochondrial respiratory chain complex III"/>
</dbReference>
<dbReference type="CORUM" id="Q9CR68"/>
<dbReference type="FunCoup" id="Q9CR68">
    <property type="interactions" value="1244"/>
</dbReference>
<dbReference type="IntAct" id="Q9CR68">
    <property type="interactions" value="7"/>
</dbReference>
<dbReference type="MINT" id="Q9CR68"/>
<dbReference type="STRING" id="10090.ENSMUSP00000045284"/>
<dbReference type="GlyGen" id="Q9CR68">
    <property type="glycosylation" value="1 site, 1 O-linked glycan (1 site)"/>
</dbReference>
<dbReference type="iPTMnet" id="Q9CR68"/>
<dbReference type="PhosphoSitePlus" id="Q9CR68"/>
<dbReference type="SwissPalm" id="Q9CR68"/>
<dbReference type="jPOST" id="Q9CR68"/>
<dbReference type="PaxDb" id="10090-ENSMUSP00000045284"/>
<dbReference type="PeptideAtlas" id="Q9CR68"/>
<dbReference type="ProteomicsDB" id="297800"/>
<dbReference type="Pumba" id="Q9CR68"/>
<dbReference type="Antibodypedia" id="28808">
    <property type="antibodies" value="294 antibodies from 34 providers"/>
</dbReference>
<dbReference type="DNASU" id="66694"/>
<dbReference type="Ensembl" id="ENSMUST00000042834.4">
    <property type="protein sequence ID" value="ENSMUSP00000045284.4"/>
    <property type="gene ID" value="ENSMUSG00000038462.4"/>
</dbReference>
<dbReference type="GeneID" id="66694"/>
<dbReference type="KEGG" id="mmu:66694"/>
<dbReference type="UCSC" id="uc007pyv.2">
    <property type="organism name" value="mouse"/>
</dbReference>
<dbReference type="AGR" id="MGI:1913944"/>
<dbReference type="CTD" id="7386"/>
<dbReference type="MGI" id="MGI:1913944">
    <property type="gene designation" value="Uqcrfs1"/>
</dbReference>
<dbReference type="VEuPathDB" id="HostDB:ENSMUSG00000038462"/>
<dbReference type="eggNOG" id="KOG1671">
    <property type="taxonomic scope" value="Eukaryota"/>
</dbReference>
<dbReference type="GeneTree" id="ENSGT00390000001014"/>
<dbReference type="HOGENOM" id="CLU_055690_0_1_1"/>
<dbReference type="InParanoid" id="Q9CR68"/>
<dbReference type="OMA" id="PPYDFND"/>
<dbReference type="OrthoDB" id="1637982at2759"/>
<dbReference type="PhylomeDB" id="Q9CR68"/>
<dbReference type="TreeFam" id="TF105037"/>
<dbReference type="Reactome" id="R-MMU-611105">
    <property type="pathway name" value="Respiratory electron transport"/>
</dbReference>
<dbReference type="Reactome" id="R-MMU-9865881">
    <property type="pathway name" value="Complex III assembly"/>
</dbReference>
<dbReference type="BioGRID-ORCS" id="66694">
    <property type="hits" value="26 hits in 77 CRISPR screens"/>
</dbReference>
<dbReference type="CD-CODE" id="CE726F99">
    <property type="entry name" value="Postsynaptic density"/>
</dbReference>
<dbReference type="ChiTaRS" id="Uqcrfs1">
    <property type="organism name" value="mouse"/>
</dbReference>
<dbReference type="PRO" id="PR:Q9CR68"/>
<dbReference type="Proteomes" id="UP000000589">
    <property type="component" value="Chromosome 13"/>
</dbReference>
<dbReference type="RNAct" id="Q9CR68">
    <property type="molecule type" value="protein"/>
</dbReference>
<dbReference type="Bgee" id="ENSMUSG00000038462">
    <property type="expression patterns" value="Expressed in myocardium of ventricle and 248 other cell types or tissues"/>
</dbReference>
<dbReference type="GO" id="GO:0005743">
    <property type="term" value="C:mitochondrial inner membrane"/>
    <property type="evidence" value="ECO:0000314"/>
    <property type="project" value="UniProtKB"/>
</dbReference>
<dbReference type="GO" id="GO:0005739">
    <property type="term" value="C:mitochondrion"/>
    <property type="evidence" value="ECO:0000314"/>
    <property type="project" value="MGI"/>
</dbReference>
<dbReference type="GO" id="GO:0043209">
    <property type="term" value="C:myelin sheath"/>
    <property type="evidence" value="ECO:0007005"/>
    <property type="project" value="UniProtKB"/>
</dbReference>
<dbReference type="GO" id="GO:0045275">
    <property type="term" value="C:respiratory chain complex III"/>
    <property type="evidence" value="ECO:0000314"/>
    <property type="project" value="UniProtKB"/>
</dbReference>
<dbReference type="GO" id="GO:0051537">
    <property type="term" value="F:2 iron, 2 sulfur cluster binding"/>
    <property type="evidence" value="ECO:0007669"/>
    <property type="project" value="UniProtKB-KW"/>
</dbReference>
<dbReference type="GO" id="GO:0046872">
    <property type="term" value="F:metal ion binding"/>
    <property type="evidence" value="ECO:0007669"/>
    <property type="project" value="UniProtKB-KW"/>
</dbReference>
<dbReference type="GO" id="GO:0044877">
    <property type="term" value="F:protein-containing complex binding"/>
    <property type="evidence" value="ECO:0007669"/>
    <property type="project" value="Ensembl"/>
</dbReference>
<dbReference type="GO" id="GO:0008121">
    <property type="term" value="F:ubiquinol-cytochrome-c reductase activity"/>
    <property type="evidence" value="ECO:0007669"/>
    <property type="project" value="UniProtKB-EC"/>
</dbReference>
<dbReference type="GO" id="GO:0022904">
    <property type="term" value="P:respiratory electron transport chain"/>
    <property type="evidence" value="ECO:0000250"/>
    <property type="project" value="UniProtKB"/>
</dbReference>
<dbReference type="GO" id="GO:0009725">
    <property type="term" value="P:response to hormone"/>
    <property type="evidence" value="ECO:0007669"/>
    <property type="project" value="Ensembl"/>
</dbReference>
<dbReference type="GO" id="GO:0009410">
    <property type="term" value="P:response to xenobiotic stimulus"/>
    <property type="evidence" value="ECO:0007669"/>
    <property type="project" value="Ensembl"/>
</dbReference>
<dbReference type="CDD" id="cd03470">
    <property type="entry name" value="Rieske_cytochrome_bc1"/>
    <property type="match status" value="1"/>
</dbReference>
<dbReference type="FunFam" id="1.20.5.270:FF:000001">
    <property type="entry name" value="Cytochrome b-c1 complex subunit Rieske, mitochondrial"/>
    <property type="match status" value="1"/>
</dbReference>
<dbReference type="FunFam" id="2.10.210.10:FF:000001">
    <property type="entry name" value="Cytochrome b-c1 complex subunit Rieske, mitochondrial"/>
    <property type="match status" value="1"/>
</dbReference>
<dbReference type="FunFam" id="2.102.10.10:FF:000001">
    <property type="entry name" value="Cytochrome b-c1 complex subunit Rieske, mitochondrial"/>
    <property type="match status" value="1"/>
</dbReference>
<dbReference type="Gene3D" id="2.10.210.10">
    <property type="entry name" value="Cytochrome Bc1 Complex, Chain I"/>
    <property type="match status" value="1"/>
</dbReference>
<dbReference type="Gene3D" id="2.102.10.10">
    <property type="entry name" value="Rieske [2Fe-2S] iron-sulphur domain"/>
    <property type="match status" value="1"/>
</dbReference>
<dbReference type="Gene3D" id="1.20.5.270">
    <property type="entry name" value="Ubiquinol cytochrome reductase, transmembrane domain"/>
    <property type="match status" value="1"/>
</dbReference>
<dbReference type="InterPro" id="IPR037008">
    <property type="entry name" value="bc1_Rieske_TM_sf"/>
</dbReference>
<dbReference type="InterPro" id="IPR011070">
    <property type="entry name" value="Globular_prot_asu/bsu"/>
</dbReference>
<dbReference type="InterPro" id="IPR017941">
    <property type="entry name" value="Rieske_2Fe-2S"/>
</dbReference>
<dbReference type="InterPro" id="IPR036922">
    <property type="entry name" value="Rieske_2Fe-2S_sf"/>
</dbReference>
<dbReference type="InterPro" id="IPR014349">
    <property type="entry name" value="Rieske_Fe-S_prot"/>
</dbReference>
<dbReference type="InterPro" id="IPR005805">
    <property type="entry name" value="Rieske_Fe-S_prot_C"/>
</dbReference>
<dbReference type="InterPro" id="IPR004192">
    <property type="entry name" value="Rieske_TM"/>
</dbReference>
<dbReference type="InterPro" id="IPR006317">
    <property type="entry name" value="Ubiquinol_cyt_c_Rdtase_Fe-S-su"/>
</dbReference>
<dbReference type="InterPro" id="IPR015248">
    <property type="entry name" value="UQCRFS1_N"/>
</dbReference>
<dbReference type="NCBIfam" id="TIGR01416">
    <property type="entry name" value="Rieske_proteo"/>
    <property type="match status" value="1"/>
</dbReference>
<dbReference type="PANTHER" id="PTHR10134">
    <property type="entry name" value="CYTOCHROME B-C1 COMPLEX SUBUNIT RIESKE, MITOCHONDRIAL"/>
    <property type="match status" value="1"/>
</dbReference>
<dbReference type="Pfam" id="PF00355">
    <property type="entry name" value="Rieske"/>
    <property type="match status" value="1"/>
</dbReference>
<dbReference type="Pfam" id="PF09165">
    <property type="entry name" value="Ubiq-Cytc-red_N"/>
    <property type="match status" value="1"/>
</dbReference>
<dbReference type="Pfam" id="PF02921">
    <property type="entry name" value="UCR_TM"/>
    <property type="match status" value="1"/>
</dbReference>
<dbReference type="PRINTS" id="PR00162">
    <property type="entry name" value="RIESKE"/>
</dbReference>
<dbReference type="SUPFAM" id="SSF50022">
    <property type="entry name" value="ISP domain"/>
    <property type="match status" value="1"/>
</dbReference>
<dbReference type="SUPFAM" id="SSF81502">
    <property type="entry name" value="ISP transmembrane anchor"/>
    <property type="match status" value="1"/>
</dbReference>
<dbReference type="SUPFAM" id="SSF56568">
    <property type="entry name" value="Non-globular alpha+beta subunits of globular proteins"/>
    <property type="match status" value="1"/>
</dbReference>
<dbReference type="PROSITE" id="PS51296">
    <property type="entry name" value="RIESKE"/>
    <property type="match status" value="1"/>
</dbReference>
<gene>
    <name evidence="10" type="primary">Uqcrfs1</name>
</gene>
<name>UCRI_MOUSE</name>
<proteinExistence type="evidence at protein level"/>
<protein>
    <recommendedName>
        <fullName>Cytochrome b-c1 complex subunit Rieske, mitochondrial</fullName>
        <ecNumber>7.1.1.8</ecNumber>
    </recommendedName>
    <alternativeName>
        <fullName>Complex III subunit 5</fullName>
    </alternativeName>
    <alternativeName>
        <fullName>Cytochrome b-c1 complex subunit 5</fullName>
    </alternativeName>
    <alternativeName>
        <fullName>Rieske iron-sulfur protein</fullName>
        <shortName>RISP</shortName>
    </alternativeName>
    <alternativeName>
        <fullName evidence="9">Rieske protein UQCRFS1</fullName>
    </alternativeName>
    <alternativeName>
        <fullName>Ubiquinol-cytochrome c reductase iron-sulfur subunit</fullName>
    </alternativeName>
    <component>
        <recommendedName>
            <fullName evidence="2">Cytochrome b-c1 complex subunit 9</fullName>
            <shortName evidence="2">Su9</shortName>
            <shortName evidence="2">Subunit 9</shortName>
        </recommendedName>
        <alternativeName>
            <fullName evidence="2">8 kDa subunit 9</fullName>
        </alternativeName>
        <alternativeName>
            <fullName>Complex III subunit IX</fullName>
        </alternativeName>
        <alternativeName>
            <fullName>Cytochrome b-c1 complex subunit 11</fullName>
        </alternativeName>
        <alternativeName>
            <fullName>UQCRFS1 mitochondrial targeting sequence</fullName>
            <shortName>UQCRFS1 MTS</shortName>
        </alternativeName>
        <alternativeName>
            <fullName evidence="2">Ubiquinol-cytochrome c reductase 8 kDa protein</fullName>
        </alternativeName>
    </component>
</protein>
<organism>
    <name type="scientific">Mus musculus</name>
    <name type="common">Mouse</name>
    <dbReference type="NCBI Taxonomy" id="10090"/>
    <lineage>
        <taxon>Eukaryota</taxon>
        <taxon>Metazoa</taxon>
        <taxon>Chordata</taxon>
        <taxon>Craniata</taxon>
        <taxon>Vertebrata</taxon>
        <taxon>Euteleostomi</taxon>
        <taxon>Mammalia</taxon>
        <taxon>Eutheria</taxon>
        <taxon>Euarchontoglires</taxon>
        <taxon>Glires</taxon>
        <taxon>Rodentia</taxon>
        <taxon>Myomorpha</taxon>
        <taxon>Muroidea</taxon>
        <taxon>Muridae</taxon>
        <taxon>Murinae</taxon>
        <taxon>Mus</taxon>
        <taxon>Mus</taxon>
    </lineage>
</organism>
<keyword id="KW-0001">2Fe-2S</keyword>
<keyword id="KW-0002">3D-structure</keyword>
<keyword id="KW-0903">Direct protein sequencing</keyword>
<keyword id="KW-1015">Disulfide bond</keyword>
<keyword id="KW-0249">Electron transport</keyword>
<keyword id="KW-0408">Iron</keyword>
<keyword id="KW-0411">Iron-sulfur</keyword>
<keyword id="KW-0472">Membrane</keyword>
<keyword id="KW-0479">Metal-binding</keyword>
<keyword id="KW-0496">Mitochondrion</keyword>
<keyword id="KW-0999">Mitochondrion inner membrane</keyword>
<keyword id="KW-1185">Reference proteome</keyword>
<keyword id="KW-0679">Respiratory chain</keyword>
<keyword id="KW-0809">Transit peptide</keyword>
<keyword id="KW-1278">Translocase</keyword>
<keyword id="KW-0812">Transmembrane</keyword>
<keyword id="KW-1133">Transmembrane helix</keyword>
<keyword id="KW-0813">Transport</keyword>
<evidence type="ECO:0000250" key="1">
    <source>
        <dbReference type="UniProtKB" id="P08067"/>
    </source>
</evidence>
<evidence type="ECO:0000250" key="2">
    <source>
        <dbReference type="UniProtKB" id="P13272"/>
    </source>
</evidence>
<evidence type="ECO:0000250" key="3">
    <source>
        <dbReference type="UniProtKB" id="P47985"/>
    </source>
</evidence>
<evidence type="ECO:0000255" key="4">
    <source>
        <dbReference type="PROSITE-ProRule" id="PRU00628"/>
    </source>
</evidence>
<evidence type="ECO:0000269" key="5">
    <source>
    </source>
</evidence>
<evidence type="ECO:0000269" key="6">
    <source>
    </source>
</evidence>
<evidence type="ECO:0000269" key="7">
    <source>
    </source>
</evidence>
<evidence type="ECO:0000269" key="8">
    <source>
    </source>
</evidence>
<evidence type="ECO:0000305" key="9"/>
<evidence type="ECO:0000312" key="10">
    <source>
        <dbReference type="MGI" id="MGI:1913944"/>
    </source>
</evidence>
<evidence type="ECO:0007744" key="11">
    <source>
        <dbReference type="PDB" id="7O37"/>
    </source>
</evidence>
<evidence type="ECO:0007744" key="12">
    <source>
        <dbReference type="PDB" id="8PW5"/>
    </source>
</evidence>
<evidence type="ECO:0007829" key="13">
    <source>
        <dbReference type="PDB" id="7O37"/>
    </source>
</evidence>
<sequence length="274" mass="29368">MLSVAARSGPFAPVLSATSRGVAGALRPLLQGAVPAASEPPVLDVKRPFLCRESLSGQAAARPLVATVGLNVPASVRFSHTDVKVPDFSDYRRAEVLDSTKSSKESSEARKGFSYLVTATTTVGVAYAAKNVVSQFVSSMSASADVLAMSKIEIKLSDIPEGKNMAFKWRGKPLFVRHRTKKEIDQEAAVEVSQLRDPQHDLDRVKKPEWVILIGVCTHLGCVPIANAGDFGGYYCPCHGSHYDASGRIRKGPAPLNLEVPAYEFTSDDVVVVG</sequence>
<feature type="chain" id="PRO_0000307244" description="Cytochrome b-c1 complex subunit 9" evidence="6">
    <location>
        <begin position="1"/>
        <end position="78"/>
    </location>
</feature>
<feature type="chain" id="PRO_0000030667" description="Cytochrome b-c1 complex subunit Rieske, mitochondrial">
    <location>
        <begin position="79"/>
        <end position="274"/>
    </location>
</feature>
<feature type="topological domain" description="Mitochondrial matrix" evidence="7 11">
    <location>
        <begin position="79"/>
        <end position="110"/>
    </location>
</feature>
<feature type="transmembrane region" description="Helical" evidence="7 11">
    <location>
        <begin position="111"/>
        <end position="137"/>
    </location>
</feature>
<feature type="topological domain" description="Mitochondrial intermembrane" evidence="7 11">
    <location>
        <begin position="138"/>
        <end position="274"/>
    </location>
</feature>
<feature type="domain" description="Rieske" evidence="4">
    <location>
        <begin position="187"/>
        <end position="272"/>
    </location>
</feature>
<feature type="binding site" evidence="7 11">
    <location>
        <position position="217"/>
    </location>
    <ligand>
        <name>[2Fe-2S] cluster</name>
        <dbReference type="ChEBI" id="CHEBI:190135"/>
    </ligand>
</feature>
<feature type="binding site" evidence="7 11">
    <location>
        <position position="219"/>
    </location>
    <ligand>
        <name>[2Fe-2S] cluster</name>
        <dbReference type="ChEBI" id="CHEBI:190135"/>
    </ligand>
</feature>
<feature type="binding site" evidence="7 11">
    <location>
        <position position="236"/>
    </location>
    <ligand>
        <name>[2Fe-2S] cluster</name>
        <dbReference type="ChEBI" id="CHEBI:190135"/>
    </ligand>
</feature>
<feature type="binding site" evidence="7 11">
    <location>
        <position position="239"/>
    </location>
    <ligand>
        <name>[2Fe-2S] cluster</name>
        <dbReference type="ChEBI" id="CHEBI:190135"/>
    </ligand>
</feature>
<feature type="binding site" evidence="7 11">
    <location>
        <position position="241"/>
    </location>
    <ligand>
        <name>[2Fe-2S] cluster</name>
        <dbReference type="ChEBI" id="CHEBI:190135"/>
    </ligand>
</feature>
<feature type="disulfide bond" evidence="7 11">
    <location>
        <begin position="222"/>
        <end position="238"/>
    </location>
</feature>
<feature type="helix" evidence="13">
    <location>
        <begin position="4"/>
        <end position="7"/>
    </location>
</feature>
<feature type="helix" evidence="13">
    <location>
        <begin position="12"/>
        <end position="15"/>
    </location>
</feature>
<feature type="strand" evidence="13">
    <location>
        <begin position="17"/>
        <end position="22"/>
    </location>
</feature>
<feature type="turn" evidence="13">
    <location>
        <begin position="52"/>
        <end position="57"/>
    </location>
</feature>
<feature type="strand" evidence="13">
    <location>
        <begin position="65"/>
        <end position="72"/>
    </location>
</feature>
<feature type="strand" evidence="13">
    <location>
        <begin position="75"/>
        <end position="77"/>
    </location>
</feature>
<feature type="helix" evidence="13">
    <location>
        <begin position="80"/>
        <end position="82"/>
    </location>
</feature>
<feature type="turn" evidence="13">
    <location>
        <begin position="89"/>
        <end position="91"/>
    </location>
</feature>
<feature type="helix" evidence="13">
    <location>
        <begin position="94"/>
        <end position="96"/>
    </location>
</feature>
<feature type="strand" evidence="13">
    <location>
        <begin position="99"/>
        <end position="101"/>
    </location>
</feature>
<feature type="strand" evidence="13">
    <location>
        <begin position="103"/>
        <end position="106"/>
    </location>
</feature>
<feature type="helix" evidence="13">
    <location>
        <begin position="107"/>
        <end position="140"/>
    </location>
</feature>
<feature type="helix" evidence="13">
    <location>
        <begin position="144"/>
        <end position="148"/>
    </location>
</feature>
<feature type="strand" evidence="13">
    <location>
        <begin position="165"/>
        <end position="169"/>
    </location>
</feature>
<feature type="strand" evidence="13">
    <location>
        <begin position="172"/>
        <end position="178"/>
    </location>
</feature>
<feature type="helix" evidence="13">
    <location>
        <begin position="181"/>
        <end position="188"/>
    </location>
</feature>
<feature type="strand" evidence="13">
    <location>
        <begin position="195"/>
        <end position="197"/>
    </location>
</feature>
<feature type="helix" evidence="13">
    <location>
        <begin position="201"/>
        <end position="204"/>
    </location>
</feature>
<feature type="strand" evidence="13">
    <location>
        <begin position="210"/>
        <end position="213"/>
    </location>
</feature>
<feature type="turn" evidence="13">
    <location>
        <begin position="218"/>
        <end position="220"/>
    </location>
</feature>
<feature type="strand" evidence="13">
    <location>
        <begin position="225"/>
        <end position="228"/>
    </location>
</feature>
<feature type="turn" evidence="13">
    <location>
        <begin position="229"/>
        <end position="232"/>
    </location>
</feature>
<feature type="strand" evidence="13">
    <location>
        <begin position="233"/>
        <end position="236"/>
    </location>
</feature>
<feature type="turn" evidence="13">
    <location>
        <begin position="237"/>
        <end position="240"/>
    </location>
</feature>
<feature type="strand" evidence="13">
    <location>
        <begin position="241"/>
        <end position="243"/>
    </location>
</feature>
<feature type="strand" evidence="13">
    <location>
        <begin position="249"/>
        <end position="253"/>
    </location>
</feature>
<feature type="strand" evidence="13">
    <location>
        <begin position="263"/>
        <end position="265"/>
    </location>
</feature>
<feature type="strand" evidence="13">
    <location>
        <begin position="271"/>
        <end position="273"/>
    </location>
</feature>
<comment type="function">
    <molecule>Cytochrome b-c1 complex subunit Rieske, mitochondrial</molecule>
    <text evidence="7 8">Component of the ubiquinol-cytochrome c oxidoreductase, a multisubunit transmembrane complex that is part of the mitochondrial electron transport chain which drives oxidative phosphorylation. The respiratory chain contains 3 multisubunit complexes succinate dehydrogenase (complex II, CII), ubiquinol-cytochrome c oxidoreductase (cytochrome b-c1 complex, complex III, CIII) and cytochrome c oxidase (complex IV, CIV), that cooperate to transfer electrons derived from NADH and succinate to molecular oxygen, creating an electrochemical gradient over the inner membrane that drives transmembrane transport and the ATP synthase. The cytochrome b-c1 complex catalyzes electron transfer from ubiquinol to cytochrome c, linking this redox reaction to translocation of protons across the mitochondrial inner membrane, with protons being carried across the membrane as hydrogens on the quinol. In the process called Q cycle, 2 protons are consumed from the matrix, 4 protons are released into the intermembrane space and 2 electrons are passed to cytochrome c. The Rieske protein is a catalytic core subunit containing a [2Fe-2S] iron-sulfur cluster. It cycles between 2 conformational states during catalysis to transfer electrons from the quinol bound in the Q(0) site in cytochrome b to cytochrome c1. Incorporation of UQCRFS1 is the penultimate step in complex III assembly.</text>
</comment>
<comment type="function">
    <molecule>Cytochrome b-c1 complex subunit 9</molecule>
    <text evidence="6">Component of the ubiquinol-cytochrome c oxidoreductase (cytochrome b-c1 complex, complex III, CIII). UQCRFS1 undergoes proteolytic processing once it is incorporated in the complex III dimer. One of the fragments, called subunit 9, corresponds to its mitochondrial targeting sequence (MTS). The proteolytic processing is necessary for the correct insertion of UQCRFS1 in the complex III dimer, but the persistence of UQCRFS1-derived fragments may prevent newly imported UQCRFS1 to be processed and assembled into complex III and is detrimental for the complex III structure and function.</text>
</comment>
<comment type="catalytic activity">
    <reaction evidence="1">
        <text>a quinol + 2 Fe(III)-[cytochrome c](out) = a quinone + 2 Fe(II)-[cytochrome c](out) + 2 H(+)(out)</text>
        <dbReference type="Rhea" id="RHEA:11484"/>
        <dbReference type="Rhea" id="RHEA-COMP:10350"/>
        <dbReference type="Rhea" id="RHEA-COMP:14399"/>
        <dbReference type="ChEBI" id="CHEBI:15378"/>
        <dbReference type="ChEBI" id="CHEBI:24646"/>
        <dbReference type="ChEBI" id="CHEBI:29033"/>
        <dbReference type="ChEBI" id="CHEBI:29034"/>
        <dbReference type="ChEBI" id="CHEBI:132124"/>
        <dbReference type="EC" id="7.1.1.8"/>
    </reaction>
</comment>
<comment type="cofactor">
    <cofactor evidence="4 7 8">
        <name>[2Fe-2S] cluster</name>
        <dbReference type="ChEBI" id="CHEBI:190135"/>
    </cofactor>
    <text evidence="4 7 8">Binds 1 [2Fe-2S] cluster per subunit. Fe-S cluster delivery to the Rieske protein is mediated by components of the iron sulfur (Fe-S) cluster assembly machinery that reside in the mitochondrial matrix (including HSC20 and LYRM7).</text>
</comment>
<comment type="subunit">
    <molecule>Cytochrome b-c1 complex subunit Rieske, mitochondrial</molecule>
    <text evidence="2 3 5 6 7 8">Component of the ubiquinol-cytochrome c oxidoreductase (cytochrome b-c1 complex, complex III, CIII), a multisubunit enzyme composed of 11 subunits (PubMed:34616041, PubMed:38575788). The complex is composed of 3 respiratory subunits cytochrome b, cytochrome c1 and Rieske protein UQCRFS1, 2 core protein subunits UQCRC1/QCR1 and UQCRC2/QCR2, and 6 low-molecular weight protein subunits UQCRH/QCR6, UQCRB/QCR7, UQCRQ/QCR8, UQCR10/QCR9, UQCR11/QCR10 and subunit 9, the cleavage product of Rieske protein UQCRFS1 (PubMed:34616041, PubMed:38575788). The complex exists as an obligatory dimer and forms supercomplexes (SCs) in the inner mitochondrial membrane with NADH-ubiquinone oxidoreductase (complex I, CI) and cytochrome c oxidase (complex IV, CIV), resulting in different assemblies (supercomplex SCI(1)III(2)IV(1) and megacomplex MCI(2)III(2)IV(2)) (PubMed:19026783, PubMed:34616041, PubMed:38575788). Incorporation of the Rieske protein UQCRFS1 is the penultimate step in complex III assembly (By similarity). Interacts with TTC19, which is involved in the clearance of UQCRFS1 fragments (PubMed:28673544).</text>
</comment>
<comment type="subunit">
    <molecule>Cytochrome b-c1 complex subunit 9</molecule>
    <text evidence="2">Component of the ubiquinol-cytochrome c oxidoreductase (cytochrome b-c1 complex, complex III, CIII). Subunit 9 corresponds to the mitochondrial targeting sequence (MTS) of Rieske protein UQCRFS1. It is retained after processing and incorporated inside complex III, where it remains bound to the complex and localizes between the 2 core subunits UQCRC1/QCR1 and UQCRC2/QCR2.</text>
</comment>
<comment type="subcellular location">
    <subcellularLocation>
        <location evidence="7 8">Mitochondrion inner membrane</location>
        <topology evidence="7 8">Single-pass membrane protein</topology>
    </subcellularLocation>
</comment>
<comment type="PTM">
    <text evidence="6">Proteolytic processing is necessary for the correct insertion of UQCRFS1 in the complex III dimer. Several fragments are generated during UQCRFS1 insertion, most probably due to the endogenous matrix-processing peptidase (MPP) activity of the 2 core protein subunits UQCRC1/QCR1 and UQCRC2/QCR2, which are homologous to the 2 mitochondrial-processing peptidase (MPP) subunits beta-MPP and alpha-MPP respectively. The action of the protease is also necessary for the clearance of the UQCRFS1 fragments.</text>
</comment>
<comment type="miscellaneous">
    <text>The Rieske protein is a high potential 2Fe-2S protein.</text>
</comment>
<comment type="similarity">
    <text evidence="9">Belongs to the Rieske iron-sulfur protein family.</text>
</comment>
<comment type="caution">
    <text evidence="6">Several peptides are generated during UQCRFS1 insertion (PubMed:28673544). According to some authors, the identification of the transit peptide as the subunit 9, does not necessary imply that it must be considered as a structural subunit of the complex III dimer as additional fragments from UQCRFS1 are also present (PubMed:28673544).</text>
</comment>
<accession>Q9CR68</accession>
<accession>Q5SVV1</accession>
<reference key="1">
    <citation type="journal article" date="2005" name="Science">
        <title>The transcriptional landscape of the mammalian genome.</title>
        <authorList>
            <person name="Carninci P."/>
            <person name="Kasukawa T."/>
            <person name="Katayama S."/>
            <person name="Gough J."/>
            <person name="Frith M.C."/>
            <person name="Maeda N."/>
            <person name="Oyama R."/>
            <person name="Ravasi T."/>
            <person name="Lenhard B."/>
            <person name="Wells C."/>
            <person name="Kodzius R."/>
            <person name="Shimokawa K."/>
            <person name="Bajic V.B."/>
            <person name="Brenner S.E."/>
            <person name="Batalov S."/>
            <person name="Forrest A.R."/>
            <person name="Zavolan M."/>
            <person name="Davis M.J."/>
            <person name="Wilming L.G."/>
            <person name="Aidinis V."/>
            <person name="Allen J.E."/>
            <person name="Ambesi-Impiombato A."/>
            <person name="Apweiler R."/>
            <person name="Aturaliya R.N."/>
            <person name="Bailey T.L."/>
            <person name="Bansal M."/>
            <person name="Baxter L."/>
            <person name="Beisel K.W."/>
            <person name="Bersano T."/>
            <person name="Bono H."/>
            <person name="Chalk A.M."/>
            <person name="Chiu K.P."/>
            <person name="Choudhary V."/>
            <person name="Christoffels A."/>
            <person name="Clutterbuck D.R."/>
            <person name="Crowe M.L."/>
            <person name="Dalla E."/>
            <person name="Dalrymple B.P."/>
            <person name="de Bono B."/>
            <person name="Della Gatta G."/>
            <person name="di Bernardo D."/>
            <person name="Down T."/>
            <person name="Engstrom P."/>
            <person name="Fagiolini M."/>
            <person name="Faulkner G."/>
            <person name="Fletcher C.F."/>
            <person name="Fukushima T."/>
            <person name="Furuno M."/>
            <person name="Futaki S."/>
            <person name="Gariboldi M."/>
            <person name="Georgii-Hemming P."/>
            <person name="Gingeras T.R."/>
            <person name="Gojobori T."/>
            <person name="Green R.E."/>
            <person name="Gustincich S."/>
            <person name="Harbers M."/>
            <person name="Hayashi Y."/>
            <person name="Hensch T.K."/>
            <person name="Hirokawa N."/>
            <person name="Hill D."/>
            <person name="Huminiecki L."/>
            <person name="Iacono M."/>
            <person name="Ikeo K."/>
            <person name="Iwama A."/>
            <person name="Ishikawa T."/>
            <person name="Jakt M."/>
            <person name="Kanapin A."/>
            <person name="Katoh M."/>
            <person name="Kawasawa Y."/>
            <person name="Kelso J."/>
            <person name="Kitamura H."/>
            <person name="Kitano H."/>
            <person name="Kollias G."/>
            <person name="Krishnan S.P."/>
            <person name="Kruger A."/>
            <person name="Kummerfeld S.K."/>
            <person name="Kurochkin I.V."/>
            <person name="Lareau L.F."/>
            <person name="Lazarevic D."/>
            <person name="Lipovich L."/>
            <person name="Liu J."/>
            <person name="Liuni S."/>
            <person name="McWilliam S."/>
            <person name="Madan Babu M."/>
            <person name="Madera M."/>
            <person name="Marchionni L."/>
            <person name="Matsuda H."/>
            <person name="Matsuzawa S."/>
            <person name="Miki H."/>
            <person name="Mignone F."/>
            <person name="Miyake S."/>
            <person name="Morris K."/>
            <person name="Mottagui-Tabar S."/>
            <person name="Mulder N."/>
            <person name="Nakano N."/>
            <person name="Nakauchi H."/>
            <person name="Ng P."/>
            <person name="Nilsson R."/>
            <person name="Nishiguchi S."/>
            <person name="Nishikawa S."/>
            <person name="Nori F."/>
            <person name="Ohara O."/>
            <person name="Okazaki Y."/>
            <person name="Orlando V."/>
            <person name="Pang K.C."/>
            <person name="Pavan W.J."/>
            <person name="Pavesi G."/>
            <person name="Pesole G."/>
            <person name="Petrovsky N."/>
            <person name="Piazza S."/>
            <person name="Reed J."/>
            <person name="Reid J.F."/>
            <person name="Ring B.Z."/>
            <person name="Ringwald M."/>
            <person name="Rost B."/>
            <person name="Ruan Y."/>
            <person name="Salzberg S.L."/>
            <person name="Sandelin A."/>
            <person name="Schneider C."/>
            <person name="Schoenbach C."/>
            <person name="Sekiguchi K."/>
            <person name="Semple C.A."/>
            <person name="Seno S."/>
            <person name="Sessa L."/>
            <person name="Sheng Y."/>
            <person name="Shibata Y."/>
            <person name="Shimada H."/>
            <person name="Shimada K."/>
            <person name="Silva D."/>
            <person name="Sinclair B."/>
            <person name="Sperling S."/>
            <person name="Stupka E."/>
            <person name="Sugiura K."/>
            <person name="Sultana R."/>
            <person name="Takenaka Y."/>
            <person name="Taki K."/>
            <person name="Tammoja K."/>
            <person name="Tan S.L."/>
            <person name="Tang S."/>
            <person name="Taylor M.S."/>
            <person name="Tegner J."/>
            <person name="Teichmann S.A."/>
            <person name="Ueda H.R."/>
            <person name="van Nimwegen E."/>
            <person name="Verardo R."/>
            <person name="Wei C.L."/>
            <person name="Yagi K."/>
            <person name="Yamanishi H."/>
            <person name="Zabarovsky E."/>
            <person name="Zhu S."/>
            <person name="Zimmer A."/>
            <person name="Hide W."/>
            <person name="Bult C."/>
            <person name="Grimmond S.M."/>
            <person name="Teasdale R.D."/>
            <person name="Liu E.T."/>
            <person name="Brusic V."/>
            <person name="Quackenbush J."/>
            <person name="Wahlestedt C."/>
            <person name="Mattick J.S."/>
            <person name="Hume D.A."/>
            <person name="Kai C."/>
            <person name="Sasaki D."/>
            <person name="Tomaru Y."/>
            <person name="Fukuda S."/>
            <person name="Kanamori-Katayama M."/>
            <person name="Suzuki M."/>
            <person name="Aoki J."/>
            <person name="Arakawa T."/>
            <person name="Iida J."/>
            <person name="Imamura K."/>
            <person name="Itoh M."/>
            <person name="Kato T."/>
            <person name="Kawaji H."/>
            <person name="Kawagashira N."/>
            <person name="Kawashima T."/>
            <person name="Kojima M."/>
            <person name="Kondo S."/>
            <person name="Konno H."/>
            <person name="Nakano K."/>
            <person name="Ninomiya N."/>
            <person name="Nishio T."/>
            <person name="Okada M."/>
            <person name="Plessy C."/>
            <person name="Shibata K."/>
            <person name="Shiraki T."/>
            <person name="Suzuki S."/>
            <person name="Tagami M."/>
            <person name="Waki K."/>
            <person name="Watahiki A."/>
            <person name="Okamura-Oho Y."/>
            <person name="Suzuki H."/>
            <person name="Kawai J."/>
            <person name="Hayashizaki Y."/>
        </authorList>
    </citation>
    <scope>NUCLEOTIDE SEQUENCE [LARGE SCALE MRNA]</scope>
    <source>
        <strain>C57BL/6J</strain>
        <tissue>Bone marrow</tissue>
        <tissue>Liver</tissue>
    </source>
</reference>
<reference key="2">
    <citation type="journal article" date="2009" name="PLoS Biol.">
        <title>Lineage-specific biology revealed by a finished genome assembly of the mouse.</title>
        <authorList>
            <person name="Church D.M."/>
            <person name="Goodstadt L."/>
            <person name="Hillier L.W."/>
            <person name="Zody M.C."/>
            <person name="Goldstein S."/>
            <person name="She X."/>
            <person name="Bult C.J."/>
            <person name="Agarwala R."/>
            <person name="Cherry J.L."/>
            <person name="DiCuccio M."/>
            <person name="Hlavina W."/>
            <person name="Kapustin Y."/>
            <person name="Meric P."/>
            <person name="Maglott D."/>
            <person name="Birtle Z."/>
            <person name="Marques A.C."/>
            <person name="Graves T."/>
            <person name="Zhou S."/>
            <person name="Teague B."/>
            <person name="Potamousis K."/>
            <person name="Churas C."/>
            <person name="Place M."/>
            <person name="Herschleb J."/>
            <person name="Runnheim R."/>
            <person name="Forrest D."/>
            <person name="Amos-Landgraf J."/>
            <person name="Schwartz D.C."/>
            <person name="Cheng Z."/>
            <person name="Lindblad-Toh K."/>
            <person name="Eichler E.E."/>
            <person name="Ponting C.P."/>
        </authorList>
    </citation>
    <scope>NUCLEOTIDE SEQUENCE [LARGE SCALE GENOMIC DNA]</scope>
    <source>
        <strain>C57BL/6J</strain>
    </source>
</reference>
<reference key="3">
    <citation type="journal article" date="2004" name="Genome Res.">
        <title>The status, quality, and expansion of the NIH full-length cDNA project: the Mammalian Gene Collection (MGC).</title>
        <authorList>
            <consortium name="The MGC Project Team"/>
        </authorList>
    </citation>
    <scope>NUCLEOTIDE SEQUENCE [LARGE SCALE MRNA]</scope>
    <source>
        <strain>FVB/N</strain>
        <tissue>Mammary tumor</tissue>
    </source>
</reference>
<reference key="4">
    <citation type="submission" date="2007-04" db="UniProtKB">
        <authorList>
            <person name="Lubec G."/>
            <person name="Kang S.U."/>
        </authorList>
    </citation>
    <scope>PROTEIN SEQUENCE OF 8-46; 85-92; 94-101; 131-151; 156-163; 171-177 AND 183-204</scope>
    <scope>IDENTIFICATION BY MASS SPECTROMETRY</scope>
    <source>
        <strain>C57BL/6J</strain>
        <tissue>Brain</tissue>
    </source>
</reference>
<reference key="5">
    <citation type="journal article" date="2008" name="Mol. Cell">
        <title>Respiratory active mitochondrial supercomplexes.</title>
        <authorList>
            <person name="Acin-Perez R."/>
            <person name="Fernandez-Silva P."/>
            <person name="Peleato M.L."/>
            <person name="Perez-Martos A."/>
            <person name="Enriquez J.A."/>
        </authorList>
    </citation>
    <scope>SUBUNIT</scope>
</reference>
<reference key="6">
    <citation type="journal article" date="2010" name="Cell">
        <title>A tissue-specific atlas of mouse protein phosphorylation and expression.</title>
        <authorList>
            <person name="Huttlin E.L."/>
            <person name="Jedrychowski M.P."/>
            <person name="Elias J.E."/>
            <person name="Goswami T."/>
            <person name="Rad R."/>
            <person name="Beausoleil S.A."/>
            <person name="Villen J."/>
            <person name="Haas W."/>
            <person name="Sowa M.E."/>
            <person name="Gygi S.P."/>
        </authorList>
    </citation>
    <scope>IDENTIFICATION BY MASS SPECTROMETRY [LARGE SCALE ANALYSIS]</scope>
    <source>
        <tissue>Brain</tissue>
        <tissue>Brown adipose tissue</tissue>
        <tissue>Heart</tissue>
        <tissue>Kidney</tissue>
        <tissue>Liver</tissue>
        <tissue>Lung</tissue>
        <tissue>Pancreas</tissue>
        <tissue>Spleen</tissue>
        <tissue>Testis</tissue>
    </source>
</reference>
<reference key="7">
    <citation type="journal article" date="2017" name="Mol. Cell">
        <title>TTC19 plays a husbandry role on UQCRFS1 turnover in the biogenesis of mitochondrial respiratory complex III.</title>
        <authorList>
            <person name="Bottani E."/>
            <person name="Cerutti R."/>
            <person name="Harbour M.E."/>
            <person name="Ravaglia S."/>
            <person name="Dogan S.A."/>
            <person name="Giordano C."/>
            <person name="Fearnley I.M."/>
            <person name="D'Amati G."/>
            <person name="Viscomi C."/>
            <person name="Fernandez-Vizarra E."/>
            <person name="Zeviani M."/>
        </authorList>
    </citation>
    <scope>PTM</scope>
    <scope>IDENTIFICATION BY MASS SPECTROMETRY</scope>
    <scope>SUBUNIT</scope>
    <scope>INTERACTION WITH TTC19</scope>
    <scope>FUNCTION</scope>
</reference>
<reference evidence="11" key="8">
    <citation type="journal article" date="2021" name="Nature">
        <title>Structure and assembly of the mammalian mitochondrial supercomplex CIII2CIV.</title>
        <authorList>
            <person name="Vercellino I."/>
            <person name="Sazanov L.A."/>
        </authorList>
    </citation>
    <scope>STRUCTURE BY ELECTRON MICROSCOPY (3.20 ANGSTROMS) IN COMPLEX WITH MITOCHONDRIAL RESPIRATORY SUPERCOMPLEX</scope>
    <scope>FUNCTION</scope>
    <scope>SUBCELLULAR LOCATION</scope>
    <scope>SUBUNIT</scope>
</reference>
<reference evidence="12" key="9">
    <citation type="journal article" date="2024" name="Nat. Struct. Mol. Biol.">
        <title>SCAF1 drives the compositional diversity of mammalian respirasomes.</title>
        <authorList>
            <person name="Vercellino I."/>
            <person name="Sazanov L.A."/>
        </authorList>
    </citation>
    <scope>STRUCTURE BY ELECTRON MICROSCOPY (3.60 ANGSTROMS) IN COMPLEX WITH MITOCHONDRIAL RESPIRATORY SUPERCOMPLEX</scope>
    <scope>FUNCTION</scope>
    <scope>SUBCELLULAR LOCATION</scope>
    <scope>SUBUNIT</scope>
</reference>